<dbReference type="EC" id="3.6.5.n1" evidence="1"/>
<dbReference type="EMBL" id="CP000671">
    <property type="protein sequence ID" value="ABQ98073.1"/>
    <property type="molecule type" value="Genomic_DNA"/>
</dbReference>
<dbReference type="SMR" id="A5UBC2"/>
<dbReference type="KEGG" id="hip:CGSHiEE_03230"/>
<dbReference type="HOGENOM" id="CLU_009995_3_3_6"/>
<dbReference type="GO" id="GO:0005886">
    <property type="term" value="C:plasma membrane"/>
    <property type="evidence" value="ECO:0007669"/>
    <property type="project" value="UniProtKB-SubCell"/>
</dbReference>
<dbReference type="GO" id="GO:0005525">
    <property type="term" value="F:GTP binding"/>
    <property type="evidence" value="ECO:0007669"/>
    <property type="project" value="UniProtKB-UniRule"/>
</dbReference>
<dbReference type="GO" id="GO:0003924">
    <property type="term" value="F:GTPase activity"/>
    <property type="evidence" value="ECO:0007669"/>
    <property type="project" value="UniProtKB-UniRule"/>
</dbReference>
<dbReference type="GO" id="GO:0097216">
    <property type="term" value="F:guanosine tetraphosphate binding"/>
    <property type="evidence" value="ECO:0007669"/>
    <property type="project" value="UniProtKB-ARBA"/>
</dbReference>
<dbReference type="GO" id="GO:0043022">
    <property type="term" value="F:ribosome binding"/>
    <property type="evidence" value="ECO:0007669"/>
    <property type="project" value="UniProtKB-UniRule"/>
</dbReference>
<dbReference type="GO" id="GO:0003746">
    <property type="term" value="F:translation elongation factor activity"/>
    <property type="evidence" value="ECO:0007669"/>
    <property type="project" value="UniProtKB-UniRule"/>
</dbReference>
<dbReference type="GO" id="GO:0045727">
    <property type="term" value="P:positive regulation of translation"/>
    <property type="evidence" value="ECO:0007669"/>
    <property type="project" value="UniProtKB-UniRule"/>
</dbReference>
<dbReference type="CDD" id="cd03699">
    <property type="entry name" value="EF4_II"/>
    <property type="match status" value="1"/>
</dbReference>
<dbReference type="CDD" id="cd16260">
    <property type="entry name" value="EF4_III"/>
    <property type="match status" value="1"/>
</dbReference>
<dbReference type="CDD" id="cd01890">
    <property type="entry name" value="LepA"/>
    <property type="match status" value="1"/>
</dbReference>
<dbReference type="CDD" id="cd03709">
    <property type="entry name" value="lepA_C"/>
    <property type="match status" value="1"/>
</dbReference>
<dbReference type="FunFam" id="3.30.70.240:FF:000005">
    <property type="entry name" value="Elongation factor 4"/>
    <property type="match status" value="1"/>
</dbReference>
<dbReference type="FunFam" id="3.40.50.300:FF:000078">
    <property type="entry name" value="Elongation factor 4"/>
    <property type="match status" value="1"/>
</dbReference>
<dbReference type="FunFam" id="2.40.30.10:FF:000015">
    <property type="entry name" value="Translation factor GUF1, mitochondrial"/>
    <property type="match status" value="1"/>
</dbReference>
<dbReference type="FunFam" id="3.30.70.2570:FF:000001">
    <property type="entry name" value="Translation factor GUF1, mitochondrial"/>
    <property type="match status" value="1"/>
</dbReference>
<dbReference type="FunFam" id="3.30.70.870:FF:000004">
    <property type="entry name" value="Translation factor GUF1, mitochondrial"/>
    <property type="match status" value="1"/>
</dbReference>
<dbReference type="Gene3D" id="3.30.70.240">
    <property type="match status" value="1"/>
</dbReference>
<dbReference type="Gene3D" id="3.30.70.2570">
    <property type="entry name" value="Elongation factor 4, C-terminal domain"/>
    <property type="match status" value="1"/>
</dbReference>
<dbReference type="Gene3D" id="3.30.70.870">
    <property type="entry name" value="Elongation Factor G (Translational Gtpase), domain 3"/>
    <property type="match status" value="1"/>
</dbReference>
<dbReference type="Gene3D" id="3.40.50.300">
    <property type="entry name" value="P-loop containing nucleotide triphosphate hydrolases"/>
    <property type="match status" value="1"/>
</dbReference>
<dbReference type="Gene3D" id="2.40.30.10">
    <property type="entry name" value="Translation factors"/>
    <property type="match status" value="1"/>
</dbReference>
<dbReference type="HAMAP" id="MF_00071">
    <property type="entry name" value="LepA"/>
    <property type="match status" value="1"/>
</dbReference>
<dbReference type="InterPro" id="IPR006297">
    <property type="entry name" value="EF-4"/>
</dbReference>
<dbReference type="InterPro" id="IPR035647">
    <property type="entry name" value="EFG_III/V"/>
</dbReference>
<dbReference type="InterPro" id="IPR000640">
    <property type="entry name" value="EFG_V-like"/>
</dbReference>
<dbReference type="InterPro" id="IPR004161">
    <property type="entry name" value="EFTu-like_2"/>
</dbReference>
<dbReference type="InterPro" id="IPR031157">
    <property type="entry name" value="G_TR_CS"/>
</dbReference>
<dbReference type="InterPro" id="IPR038363">
    <property type="entry name" value="LepA_C_sf"/>
</dbReference>
<dbReference type="InterPro" id="IPR013842">
    <property type="entry name" value="LepA_CTD"/>
</dbReference>
<dbReference type="InterPro" id="IPR035654">
    <property type="entry name" value="LepA_IV"/>
</dbReference>
<dbReference type="InterPro" id="IPR027417">
    <property type="entry name" value="P-loop_NTPase"/>
</dbReference>
<dbReference type="InterPro" id="IPR005225">
    <property type="entry name" value="Small_GTP-bd"/>
</dbReference>
<dbReference type="InterPro" id="IPR000795">
    <property type="entry name" value="T_Tr_GTP-bd_dom"/>
</dbReference>
<dbReference type="NCBIfam" id="TIGR01393">
    <property type="entry name" value="lepA"/>
    <property type="match status" value="1"/>
</dbReference>
<dbReference type="NCBIfam" id="TIGR00231">
    <property type="entry name" value="small_GTP"/>
    <property type="match status" value="1"/>
</dbReference>
<dbReference type="PANTHER" id="PTHR43512:SF4">
    <property type="entry name" value="TRANSLATION FACTOR GUF1 HOMOLOG, CHLOROPLASTIC"/>
    <property type="match status" value="1"/>
</dbReference>
<dbReference type="PANTHER" id="PTHR43512">
    <property type="entry name" value="TRANSLATION FACTOR GUF1-RELATED"/>
    <property type="match status" value="1"/>
</dbReference>
<dbReference type="Pfam" id="PF00679">
    <property type="entry name" value="EFG_C"/>
    <property type="match status" value="1"/>
</dbReference>
<dbReference type="Pfam" id="PF00009">
    <property type="entry name" value="GTP_EFTU"/>
    <property type="match status" value="1"/>
</dbReference>
<dbReference type="Pfam" id="PF03144">
    <property type="entry name" value="GTP_EFTU_D2"/>
    <property type="match status" value="1"/>
</dbReference>
<dbReference type="Pfam" id="PF06421">
    <property type="entry name" value="LepA_C"/>
    <property type="match status" value="1"/>
</dbReference>
<dbReference type="PRINTS" id="PR00315">
    <property type="entry name" value="ELONGATNFCT"/>
</dbReference>
<dbReference type="SUPFAM" id="SSF54980">
    <property type="entry name" value="EF-G C-terminal domain-like"/>
    <property type="match status" value="2"/>
</dbReference>
<dbReference type="SUPFAM" id="SSF52540">
    <property type="entry name" value="P-loop containing nucleoside triphosphate hydrolases"/>
    <property type="match status" value="1"/>
</dbReference>
<dbReference type="PROSITE" id="PS00301">
    <property type="entry name" value="G_TR_1"/>
    <property type="match status" value="1"/>
</dbReference>
<dbReference type="PROSITE" id="PS51722">
    <property type="entry name" value="G_TR_2"/>
    <property type="match status" value="1"/>
</dbReference>
<comment type="function">
    <text evidence="1">Required for accurate and efficient protein synthesis under certain stress conditions. May act as a fidelity factor of the translation reaction, by catalyzing a one-codon backward translocation of tRNAs on improperly translocated ribosomes. Back-translocation proceeds from a post-translocation (POST) complex to a pre-translocation (PRE) complex, thus giving elongation factor G a second chance to translocate the tRNAs correctly. Binds to ribosomes in a GTP-dependent manner.</text>
</comment>
<comment type="catalytic activity">
    <reaction evidence="1">
        <text>GTP + H2O = GDP + phosphate + H(+)</text>
        <dbReference type="Rhea" id="RHEA:19669"/>
        <dbReference type="ChEBI" id="CHEBI:15377"/>
        <dbReference type="ChEBI" id="CHEBI:15378"/>
        <dbReference type="ChEBI" id="CHEBI:37565"/>
        <dbReference type="ChEBI" id="CHEBI:43474"/>
        <dbReference type="ChEBI" id="CHEBI:58189"/>
        <dbReference type="EC" id="3.6.5.n1"/>
    </reaction>
</comment>
<comment type="subcellular location">
    <subcellularLocation>
        <location evidence="1">Cell inner membrane</location>
        <topology evidence="1">Peripheral membrane protein</topology>
        <orientation evidence="1">Cytoplasmic side</orientation>
    </subcellularLocation>
</comment>
<comment type="similarity">
    <text evidence="1">Belongs to the TRAFAC class translation factor GTPase superfamily. Classic translation factor GTPase family. LepA subfamily.</text>
</comment>
<organism>
    <name type="scientific">Haemophilus influenzae (strain PittEE)</name>
    <dbReference type="NCBI Taxonomy" id="374930"/>
    <lineage>
        <taxon>Bacteria</taxon>
        <taxon>Pseudomonadati</taxon>
        <taxon>Pseudomonadota</taxon>
        <taxon>Gammaproteobacteria</taxon>
        <taxon>Pasteurellales</taxon>
        <taxon>Pasteurellaceae</taxon>
        <taxon>Haemophilus</taxon>
    </lineage>
</organism>
<proteinExistence type="inferred from homology"/>
<protein>
    <recommendedName>
        <fullName evidence="1">Elongation factor 4</fullName>
        <shortName evidence="1">EF-4</shortName>
        <ecNumber evidence="1">3.6.5.n1</ecNumber>
    </recommendedName>
    <alternativeName>
        <fullName evidence="1">Ribosomal back-translocase LepA</fullName>
    </alternativeName>
</protein>
<gene>
    <name evidence="1" type="primary">lepA</name>
    <name type="ordered locus">CGSHiEE_03230</name>
</gene>
<evidence type="ECO:0000255" key="1">
    <source>
        <dbReference type="HAMAP-Rule" id="MF_00071"/>
    </source>
</evidence>
<accession>A5UBC2</accession>
<sequence>MKNIRNFSIIAHIDHGKSTLSDRLIQTCGGLSDREMEAQVLDSMDLERERGITIKAQSVTLNYKAKDGETYQLNFIDTPGHVDFSYEVSRSLAACEGALLVVDAGQGVEAQTLANCYTAIEMDLEVVPILNKIDLPAADPERVAEEIEDIVGIDAMEAVRCSAKTGVGIEDVLEEIVAKIPAPEGDPNAPLQALIIDSWFDNYLGVVSLVRIKNGVLRKGDKIKVMSTGQTYNVDRLGIFTPKQEDTTVLECGEVGWVVCAIKDILGAPVGDTLTHQHNSATEVLPGFKKVKPQVYAGLFPVSSDDYEAFRDALGKLSLNDASLFYEPETSTALGFGFRCGFLGLLHMEIIQERLEREYDLDLITTAPTVIYEVQLTNGEVVYVDSPAKLPPLNNIAEIREPIAECNMLVPQEYLGNVITLCVEKRGVQTNMVYHGNQIALTYEIPMGEVVLDFFDRLKSTSRGYASLDYGFKRFQAADMVRVDIMINSERVDALALIVHKDNSQYRGRELVEKMRELIPRQQFDIAIQAAIGNHIIARSTVKQLRKNVLAKCYGGDVSRKKKLLQKQKEGKKRMKSLGNVEVPQEAFLAILHVGKDK</sequence>
<name>LEPA_HAEIE</name>
<feature type="chain" id="PRO_1000032002" description="Elongation factor 4">
    <location>
        <begin position="1"/>
        <end position="598"/>
    </location>
</feature>
<feature type="domain" description="tr-type G">
    <location>
        <begin position="2"/>
        <end position="184"/>
    </location>
</feature>
<feature type="binding site" evidence="1">
    <location>
        <begin position="14"/>
        <end position="19"/>
    </location>
    <ligand>
        <name>GTP</name>
        <dbReference type="ChEBI" id="CHEBI:37565"/>
    </ligand>
</feature>
<feature type="binding site" evidence="1">
    <location>
        <begin position="131"/>
        <end position="134"/>
    </location>
    <ligand>
        <name>GTP</name>
        <dbReference type="ChEBI" id="CHEBI:37565"/>
    </ligand>
</feature>
<reference key="1">
    <citation type="journal article" date="2007" name="Genome Biol.">
        <title>Characterization and modeling of the Haemophilus influenzae core and supragenomes based on the complete genomic sequences of Rd and 12 clinical nontypeable strains.</title>
        <authorList>
            <person name="Hogg J.S."/>
            <person name="Hu F.Z."/>
            <person name="Janto B."/>
            <person name="Boissy R."/>
            <person name="Hayes J."/>
            <person name="Keefe R."/>
            <person name="Post J.C."/>
            <person name="Ehrlich G.D."/>
        </authorList>
    </citation>
    <scope>NUCLEOTIDE SEQUENCE [LARGE SCALE GENOMIC DNA]</scope>
    <source>
        <strain>PittEE</strain>
    </source>
</reference>
<keyword id="KW-0997">Cell inner membrane</keyword>
<keyword id="KW-1003">Cell membrane</keyword>
<keyword id="KW-0342">GTP-binding</keyword>
<keyword id="KW-0378">Hydrolase</keyword>
<keyword id="KW-0472">Membrane</keyword>
<keyword id="KW-0547">Nucleotide-binding</keyword>
<keyword id="KW-0648">Protein biosynthesis</keyword>